<protein>
    <recommendedName>
        <fullName>Protein arginine N-methyltransferase 9</fullName>
    </recommendedName>
    <alternativeName>
        <fullName>Protein arginine N-methyltransferase 10</fullName>
        <ecNumber evidence="2 3 4">2.1.1.320</ecNumber>
    </alternativeName>
</protein>
<evidence type="ECO:0000255" key="1">
    <source>
        <dbReference type="PROSITE-ProRule" id="PRU01015"/>
    </source>
</evidence>
<evidence type="ECO:0000269" key="2">
    <source>
    </source>
</evidence>
<evidence type="ECO:0000269" key="3">
    <source>
    </source>
</evidence>
<evidence type="ECO:0000269" key="4">
    <source>
    </source>
</evidence>
<evidence type="ECO:0000303" key="5">
    <source>
    </source>
</evidence>
<evidence type="ECO:0000305" key="6"/>
<evidence type="ECO:0000312" key="7">
    <source>
        <dbReference type="HGNC" id="HGNC:25099"/>
    </source>
</evidence>
<evidence type="ECO:0007829" key="8">
    <source>
        <dbReference type="PDB" id="6PDM"/>
    </source>
</evidence>
<evidence type="ECO:0007829" key="9">
    <source>
        <dbReference type="PDB" id="7RBQ"/>
    </source>
</evidence>
<evidence type="ECO:0007829" key="10">
    <source>
        <dbReference type="PDB" id="7T39"/>
    </source>
</evidence>
<sequence length="845" mass="94501">MSNSRPRSRRDAGGGAGAAGRDELVSRSLQSAEHCLGVQDFGTAYAHYLLVLSLAPELKHDVKETFQYTLFRWAEELDALSRIQDLLGCYEQALELFPDDEVICNSMGEHLFRMGFRDEAAGYFHKAVKLNPDFSDAKENFYRVANWLVERWHFIMLNDTKRNTIYNAAIQKAVCLGSKSVLDIGAGTGILSMFAKKAGAHSVYACELSKTMYELACDVVAANKMEAGIKLLHTKSLDIEIPKHIPERVSLVVTETVDAGLFGEGIVESLIHAWEHLLLQPKTKGESANCEKYGKVIPASAVIFGMAVECAEIRRHHRVGIKDIAGIHLPTNVKFQSPAYSSVDTEETIEPYTTEKMSRVPGGYLALTECFEIMTVDFNNLQELKSLATKKPDKIGIPVIKEGILDAIMVWFVLQLDDEHSLSTSPSEETCWEQAVYPVQDLADYWIKPGDHVMMEVSCQDCYLRIQSISVLGLECEMDVAKSFTQNKDLLSLGNEAELCSALANLQTSKPDAVEQTCILESTEIALLNNIPYHEGFKMAMSKVLSSLTPEKLYQTMDTHCQNEMSSGTGQSNTVQNILEPFYVLDVSEGFSVLPVIAGTLGQVKPYSSVEKDQHRIALDLISEANHFPKETLEFWLRHVEDESAMLQRPKSDKLWSIIILDVIEPSGLIQQEIMEKAAISRCLLQSGGKIFPQYVLMFGLLVESQTLLEENAVQGTERTLGLNIAPFINQFQVPIRVFLDLSSLPCIPLSKPVELLRLDLMTPYLNTSNREVKVYVCKSGRLTAIPFWYHMYLDEEIRLDTSSEASHWKQAAVVLDNPIQVEMGEELVLSIQHHKSNVSITVKQ</sequence>
<name>ANM9_HUMAN</name>
<comment type="function">
    <text evidence="2 3">Arginine methyltransferase that can both catalyze the formation of omega-N monomethylarginine (MMA) and symmetrical dimethylarginine (sDMA). Specifically mediates the symmetrical dimethylation of SF3B2. Involved in the regulation of alternative splicing of pre-mRNA (PubMed:25737013, PubMed:25979344).</text>
</comment>
<comment type="catalytic activity">
    <reaction evidence="2 3 4">
        <text>L-arginyl-[protein] + 2 S-adenosyl-L-methionine = N(omega),N(omega)'-dimethyl-L-arginyl-[protein] + 2 S-adenosyl-L-homocysteine + 2 H(+)</text>
        <dbReference type="Rhea" id="RHEA:48108"/>
        <dbReference type="Rhea" id="RHEA-COMP:10532"/>
        <dbReference type="Rhea" id="RHEA-COMP:11992"/>
        <dbReference type="ChEBI" id="CHEBI:15378"/>
        <dbReference type="ChEBI" id="CHEBI:29965"/>
        <dbReference type="ChEBI" id="CHEBI:57856"/>
        <dbReference type="ChEBI" id="CHEBI:59789"/>
        <dbReference type="ChEBI" id="CHEBI:88221"/>
        <dbReference type="EC" id="2.1.1.320"/>
    </reaction>
</comment>
<comment type="biophysicochemical properties">
    <phDependence>
        <text evidence="3">Optimum pH is between 7.5 and 8.0.</text>
    </phDependence>
    <temperatureDependence>
        <text evidence="3">Optimum temperature is 37 degrees Celsius.</text>
    </temperatureDependence>
</comment>
<comment type="subunit">
    <text evidence="2">Found in a complex with PRMT9, SF3B2 and SF3B4 (PubMed:25737013). Interacts with SF3B2 (PubMed:25737013).</text>
</comment>
<comment type="interaction">
    <interactant intactId="EBI-10962083">
        <id>Q6P2P2</id>
    </interactant>
    <interactant intactId="EBI-749111">
        <id>Q13435</id>
        <label>SF3B2</label>
    </interactant>
    <organismsDiffer>false</organismsDiffer>
    <experiments>11</experiments>
</comment>
<comment type="interaction">
    <interactant intactId="EBI-10962083">
        <id>Q6P2P2</id>
    </interactant>
    <interactant intactId="EBI-348469">
        <id>Q15427</id>
        <label>SF3B4</label>
    </interactant>
    <organismsDiffer>false</organismsDiffer>
    <experiments>5</experiments>
</comment>
<comment type="subcellular location">
    <subcellularLocation>
        <location evidence="2 3">Cytoplasm</location>
    </subcellularLocation>
</comment>
<comment type="alternative products">
    <event type="alternative splicing"/>
    <isoform>
        <id>Q6P2P2-1</id>
        <name>1</name>
        <sequence type="displayed"/>
    </isoform>
    <isoform>
        <id>Q6P2P2-2</id>
        <name>2</name>
        <sequence type="described" ref="VSP_053972"/>
    </isoform>
</comment>
<comment type="similarity">
    <text evidence="1">Belongs to the class I-like SAM-binding methyltransferase superfamily. Protein arginine N-methyltransferase family.</text>
</comment>
<comment type="caution">
    <text evidence="6">This protein should not be confused with FBXO11 (AC Q86XK2) that was initially erroneously named PRMT9.</text>
</comment>
<comment type="sequence caution" evidence="6">
    <conflict type="miscellaneous discrepancy">
        <sequence resource="EMBL-CDS" id="BAC87459"/>
    </conflict>
    <text>Intron retention.</text>
</comment>
<accession>Q6P2P2</accession>
<accession>A8KA39</accession>
<accession>B3KU92</accession>
<accession>Q6ZR58</accession>
<accession>Q8N383</accession>
<accession>Q9BT55</accession>
<accession>Q9NT98</accession>
<organism>
    <name type="scientific">Homo sapiens</name>
    <name type="common">Human</name>
    <dbReference type="NCBI Taxonomy" id="9606"/>
    <lineage>
        <taxon>Eukaryota</taxon>
        <taxon>Metazoa</taxon>
        <taxon>Chordata</taxon>
        <taxon>Craniata</taxon>
        <taxon>Vertebrata</taxon>
        <taxon>Euteleostomi</taxon>
        <taxon>Mammalia</taxon>
        <taxon>Eutheria</taxon>
        <taxon>Euarchontoglires</taxon>
        <taxon>Primates</taxon>
        <taxon>Haplorrhini</taxon>
        <taxon>Catarrhini</taxon>
        <taxon>Hominidae</taxon>
        <taxon>Homo</taxon>
    </lineage>
</organism>
<gene>
    <name evidence="7" type="primary">PRMT9</name>
    <name type="synonym">PRMT10</name>
</gene>
<keyword id="KW-0002">3D-structure</keyword>
<keyword id="KW-0025">Alternative splicing</keyword>
<keyword id="KW-0963">Cytoplasm</keyword>
<keyword id="KW-0489">Methyltransferase</keyword>
<keyword id="KW-1267">Proteomics identification</keyword>
<keyword id="KW-1185">Reference proteome</keyword>
<keyword id="KW-0677">Repeat</keyword>
<keyword id="KW-0949">S-adenosyl-L-methionine</keyword>
<keyword id="KW-0802">TPR repeat</keyword>
<keyword id="KW-0808">Transferase</keyword>
<dbReference type="EC" id="2.1.1.320" evidence="2 3 4"/>
<dbReference type="EMBL" id="AK128483">
    <property type="protein sequence ID" value="BAC87459.1"/>
    <property type="status" value="ALT_SEQ"/>
    <property type="molecule type" value="mRNA"/>
</dbReference>
<dbReference type="EMBL" id="AK096703">
    <property type="protein sequence ID" value="BAG53354.1"/>
    <property type="molecule type" value="mRNA"/>
</dbReference>
<dbReference type="EMBL" id="AK292904">
    <property type="protein sequence ID" value="BAF85593.1"/>
    <property type="molecule type" value="mRNA"/>
</dbReference>
<dbReference type="EMBL" id="AC093835">
    <property type="status" value="NOT_ANNOTATED_CDS"/>
    <property type="molecule type" value="Genomic_DNA"/>
</dbReference>
<dbReference type="EMBL" id="CH471056">
    <property type="protein sequence ID" value="EAX05013.1"/>
    <property type="molecule type" value="Genomic_DNA"/>
</dbReference>
<dbReference type="EMBL" id="BC004337">
    <property type="protein sequence ID" value="AAH04337.1"/>
    <property type="molecule type" value="mRNA"/>
</dbReference>
<dbReference type="EMBL" id="BC021250">
    <property type="protein sequence ID" value="AAH21250.2"/>
    <property type="molecule type" value="mRNA"/>
</dbReference>
<dbReference type="EMBL" id="BC064403">
    <property type="protein sequence ID" value="AAH64403.1"/>
    <property type="molecule type" value="mRNA"/>
</dbReference>
<dbReference type="EMBL" id="AL137452">
    <property type="protein sequence ID" value="CAB70744.1"/>
    <property type="molecule type" value="mRNA"/>
</dbReference>
<dbReference type="EMBL" id="CH471056">
    <property type="protein sequence ID" value="EAX05011.1"/>
    <property type="molecule type" value="Genomic_DNA"/>
</dbReference>
<dbReference type="CCDS" id="CCDS3771.1">
    <molecule id="Q6P2P2-1"/>
</dbReference>
<dbReference type="PIR" id="T46267">
    <property type="entry name" value="T46267"/>
</dbReference>
<dbReference type="RefSeq" id="NP_001291387.1">
    <molecule id="Q6P2P2-2"/>
    <property type="nucleotide sequence ID" value="NM_001304458.2"/>
</dbReference>
<dbReference type="RefSeq" id="NP_001337071.1">
    <molecule id="Q6P2P2-2"/>
    <property type="nucleotide sequence ID" value="NM_001350142.2"/>
</dbReference>
<dbReference type="RefSeq" id="NP_612373.2">
    <molecule id="Q6P2P2-1"/>
    <property type="nucleotide sequence ID" value="NM_138364.3"/>
</dbReference>
<dbReference type="PDB" id="6PDM">
    <property type="method" value="X-ray"/>
    <property type="resolution" value="2.45 A"/>
    <property type="chains" value="A=127-845"/>
</dbReference>
<dbReference type="PDB" id="7RBQ">
    <property type="method" value="X-ray"/>
    <property type="resolution" value="2.20 A"/>
    <property type="chains" value="A=127-845"/>
</dbReference>
<dbReference type="PDB" id="7T39">
    <property type="method" value="X-ray"/>
    <property type="resolution" value="2.81 A"/>
    <property type="chains" value="A=127-845"/>
</dbReference>
<dbReference type="PDB" id="9AY9">
    <property type="method" value="X-ray"/>
    <property type="resolution" value="2.22 A"/>
    <property type="chains" value="A/B/C/D=127-845"/>
</dbReference>
<dbReference type="PDBsum" id="6PDM"/>
<dbReference type="PDBsum" id="7RBQ"/>
<dbReference type="PDBsum" id="7T39"/>
<dbReference type="PDBsum" id="9AY9"/>
<dbReference type="SMR" id="Q6P2P2"/>
<dbReference type="BioGRID" id="124766">
    <property type="interactions" value="34"/>
</dbReference>
<dbReference type="FunCoup" id="Q6P2P2">
    <property type="interactions" value="1954"/>
</dbReference>
<dbReference type="IntAct" id="Q6P2P2">
    <property type="interactions" value="25"/>
</dbReference>
<dbReference type="STRING" id="9606.ENSP00000314396"/>
<dbReference type="BindingDB" id="Q6P2P2"/>
<dbReference type="ChEMBL" id="CHEMBL4105724"/>
<dbReference type="GlyGen" id="Q6P2P2">
    <property type="glycosylation" value="1 site, 1 O-linked glycan (1 site)"/>
</dbReference>
<dbReference type="iPTMnet" id="Q6P2P2"/>
<dbReference type="PhosphoSitePlus" id="Q6P2P2"/>
<dbReference type="SwissPalm" id="Q6P2P2"/>
<dbReference type="BioMuta" id="PRMT9"/>
<dbReference type="DMDM" id="74758248"/>
<dbReference type="jPOST" id="Q6P2P2"/>
<dbReference type="MassIVE" id="Q6P2P2"/>
<dbReference type="PaxDb" id="9606-ENSP00000314396"/>
<dbReference type="PeptideAtlas" id="Q6P2P2"/>
<dbReference type="ProteomicsDB" id="3704"/>
<dbReference type="ProteomicsDB" id="66914">
    <molecule id="Q6P2P2-1"/>
</dbReference>
<dbReference type="ProteomicsDB" id="66915">
    <molecule id="Q6P2P2-2"/>
</dbReference>
<dbReference type="Pumba" id="Q6P2P2"/>
<dbReference type="Antibodypedia" id="49190">
    <property type="antibodies" value="129 antibodies from 19 providers"/>
</dbReference>
<dbReference type="DNASU" id="90826"/>
<dbReference type="Ensembl" id="ENST00000322396.7">
    <molecule id="Q6P2P2-1"/>
    <property type="protein sequence ID" value="ENSP00000314396.6"/>
    <property type="gene ID" value="ENSG00000164169.13"/>
</dbReference>
<dbReference type="GeneID" id="90826"/>
<dbReference type="KEGG" id="hsa:90826"/>
<dbReference type="MANE-Select" id="ENST00000322396.7">
    <property type="protein sequence ID" value="ENSP00000314396.6"/>
    <property type="RefSeq nucleotide sequence ID" value="NM_138364.4"/>
    <property type="RefSeq protein sequence ID" value="NP_612373.2"/>
</dbReference>
<dbReference type="UCSC" id="uc003ilc.4">
    <molecule id="Q6P2P2-1"/>
    <property type="organism name" value="human"/>
</dbReference>
<dbReference type="AGR" id="HGNC:25099"/>
<dbReference type="CTD" id="90826"/>
<dbReference type="DisGeNET" id="90826"/>
<dbReference type="GeneCards" id="PRMT9"/>
<dbReference type="HGNC" id="HGNC:25099">
    <property type="gene designation" value="PRMT9"/>
</dbReference>
<dbReference type="HPA" id="ENSG00000164169">
    <property type="expression patterns" value="Low tissue specificity"/>
</dbReference>
<dbReference type="MalaCards" id="PRMT9"/>
<dbReference type="MIM" id="616125">
    <property type="type" value="gene"/>
</dbReference>
<dbReference type="neXtProt" id="NX_Q6P2P2"/>
<dbReference type="OpenTargets" id="ENSG00000164169"/>
<dbReference type="PharmGKB" id="PA165664476"/>
<dbReference type="VEuPathDB" id="HostDB:ENSG00000164169"/>
<dbReference type="eggNOG" id="KOG1501">
    <property type="taxonomic scope" value="Eukaryota"/>
</dbReference>
<dbReference type="GeneTree" id="ENSGT00940000158472"/>
<dbReference type="HOGENOM" id="CLU_017482_1_0_1"/>
<dbReference type="InParanoid" id="Q6P2P2"/>
<dbReference type="OMA" id="CQNEMSS"/>
<dbReference type="OrthoDB" id="5980806at2759"/>
<dbReference type="PAN-GO" id="Q6P2P2">
    <property type="GO annotations" value="1 GO annotation based on evolutionary models"/>
</dbReference>
<dbReference type="PhylomeDB" id="Q6P2P2"/>
<dbReference type="TreeFam" id="TF315221"/>
<dbReference type="BioCyc" id="MetaCyc:ENSG00000164169-MONOMER"/>
<dbReference type="BRENDA" id="2.1.1.320">
    <property type="organism ID" value="2681"/>
</dbReference>
<dbReference type="PathwayCommons" id="Q6P2P2"/>
<dbReference type="SignaLink" id="Q6P2P2"/>
<dbReference type="BioGRID-ORCS" id="90826">
    <property type="hits" value="26 hits in 1165 CRISPR screens"/>
</dbReference>
<dbReference type="ChiTaRS" id="PRMT9">
    <property type="organism name" value="human"/>
</dbReference>
<dbReference type="GenomeRNAi" id="90826"/>
<dbReference type="Pharos" id="Q6P2P2">
    <property type="development level" value="Tbio"/>
</dbReference>
<dbReference type="PRO" id="PR:Q6P2P2"/>
<dbReference type="Proteomes" id="UP000005640">
    <property type="component" value="Chromosome 4"/>
</dbReference>
<dbReference type="RNAct" id="Q6P2P2">
    <property type="molecule type" value="protein"/>
</dbReference>
<dbReference type="Bgee" id="ENSG00000164169">
    <property type="expression patterns" value="Expressed in secondary oocyte and 168 other cell types or tissues"/>
</dbReference>
<dbReference type="ExpressionAtlas" id="Q6P2P2">
    <property type="expression patterns" value="baseline and differential"/>
</dbReference>
<dbReference type="GO" id="GO:0005737">
    <property type="term" value="C:cytoplasm"/>
    <property type="evidence" value="ECO:0000314"/>
    <property type="project" value="UniProtKB"/>
</dbReference>
<dbReference type="GO" id="GO:0005634">
    <property type="term" value="C:nucleus"/>
    <property type="evidence" value="ECO:0000318"/>
    <property type="project" value="GO_Central"/>
</dbReference>
<dbReference type="GO" id="GO:0042054">
    <property type="term" value="F:histone methyltransferase activity"/>
    <property type="evidence" value="ECO:0000318"/>
    <property type="project" value="GO_Central"/>
</dbReference>
<dbReference type="GO" id="GO:0016274">
    <property type="term" value="F:protein-arginine N-methyltransferase activity"/>
    <property type="evidence" value="ECO:0000314"/>
    <property type="project" value="UniProtKB"/>
</dbReference>
<dbReference type="GO" id="GO:0035243">
    <property type="term" value="F:protein-arginine omega-N symmetric methyltransferase activity"/>
    <property type="evidence" value="ECO:0000315"/>
    <property type="project" value="UniProtKB"/>
</dbReference>
<dbReference type="GO" id="GO:0006338">
    <property type="term" value="P:chromatin remodeling"/>
    <property type="evidence" value="ECO:0000318"/>
    <property type="project" value="GO_Central"/>
</dbReference>
<dbReference type="GO" id="GO:0032259">
    <property type="term" value="P:methylation"/>
    <property type="evidence" value="ECO:0007669"/>
    <property type="project" value="UniProtKB-KW"/>
</dbReference>
<dbReference type="GO" id="GO:0006397">
    <property type="term" value="P:mRNA processing"/>
    <property type="evidence" value="ECO:0000315"/>
    <property type="project" value="UniProtKB"/>
</dbReference>
<dbReference type="GO" id="GO:0006355">
    <property type="term" value="P:regulation of DNA-templated transcription"/>
    <property type="evidence" value="ECO:0000318"/>
    <property type="project" value="GO_Central"/>
</dbReference>
<dbReference type="CDD" id="cd02440">
    <property type="entry name" value="AdoMet_MTases"/>
    <property type="match status" value="1"/>
</dbReference>
<dbReference type="FunFam" id="1.25.40.10:FF:000138">
    <property type="entry name" value="Protein arginine methyltransferase 9"/>
    <property type="match status" value="1"/>
</dbReference>
<dbReference type="FunFam" id="2.70.160.11:FF:000006">
    <property type="entry name" value="Protein arginine methyltransferase 9"/>
    <property type="match status" value="1"/>
</dbReference>
<dbReference type="FunFam" id="3.40.50.150:FF:000078">
    <property type="entry name" value="Protein arginine methyltransferase 9"/>
    <property type="match status" value="1"/>
</dbReference>
<dbReference type="FunFam" id="3.40.50.150:FF:000384">
    <property type="entry name" value="Protein arginine methyltransferase 9"/>
    <property type="match status" value="1"/>
</dbReference>
<dbReference type="FunFam" id="2.70.160.11:FF:000011">
    <property type="entry name" value="Protein arginine N-methyltransferase 9"/>
    <property type="match status" value="1"/>
</dbReference>
<dbReference type="Gene3D" id="2.70.160.11">
    <property type="entry name" value="Hnrnp arginine n-methyltransferase1"/>
    <property type="match status" value="2"/>
</dbReference>
<dbReference type="Gene3D" id="1.25.40.10">
    <property type="entry name" value="Tetratricopeptide repeat domain"/>
    <property type="match status" value="1"/>
</dbReference>
<dbReference type="Gene3D" id="3.40.50.150">
    <property type="entry name" value="Vaccinia Virus protein VP39"/>
    <property type="match status" value="1"/>
</dbReference>
<dbReference type="InterPro" id="IPR025799">
    <property type="entry name" value="Arg_MeTrfase"/>
</dbReference>
<dbReference type="InterPro" id="IPR055135">
    <property type="entry name" value="PRMT_dom"/>
</dbReference>
<dbReference type="InterPro" id="IPR029063">
    <property type="entry name" value="SAM-dependent_MTases_sf"/>
</dbReference>
<dbReference type="InterPro" id="IPR011990">
    <property type="entry name" value="TPR-like_helical_dom_sf"/>
</dbReference>
<dbReference type="InterPro" id="IPR019734">
    <property type="entry name" value="TPR_rpt"/>
</dbReference>
<dbReference type="PANTHER" id="PTHR11006">
    <property type="entry name" value="PROTEIN ARGININE N-METHYLTRANSFERASE"/>
    <property type="match status" value="1"/>
</dbReference>
<dbReference type="PANTHER" id="PTHR11006:SF60">
    <property type="entry name" value="PROTEIN ARGININE N-METHYLTRANSFERASE 9"/>
    <property type="match status" value="1"/>
</dbReference>
<dbReference type="Pfam" id="PF06325">
    <property type="entry name" value="PrmA"/>
    <property type="match status" value="1"/>
</dbReference>
<dbReference type="Pfam" id="PF22528">
    <property type="entry name" value="PRMT_C"/>
    <property type="match status" value="1"/>
</dbReference>
<dbReference type="SUPFAM" id="SSF53335">
    <property type="entry name" value="S-adenosyl-L-methionine-dependent methyltransferases"/>
    <property type="match status" value="2"/>
</dbReference>
<dbReference type="SUPFAM" id="SSF48452">
    <property type="entry name" value="TPR-like"/>
    <property type="match status" value="1"/>
</dbReference>
<dbReference type="PROSITE" id="PS51678">
    <property type="entry name" value="SAM_MT_PRMT"/>
    <property type="match status" value="2"/>
</dbReference>
<dbReference type="PROSITE" id="PS50005">
    <property type="entry name" value="TPR"/>
    <property type="match status" value="2"/>
</dbReference>
<dbReference type="PROSITE" id="PS50293">
    <property type="entry name" value="TPR_REGION"/>
    <property type="match status" value="1"/>
</dbReference>
<reference key="1">
    <citation type="journal article" date="2004" name="Nat. Genet.">
        <title>Complete sequencing and characterization of 21,243 full-length human cDNAs.</title>
        <authorList>
            <person name="Ota T."/>
            <person name="Suzuki Y."/>
            <person name="Nishikawa T."/>
            <person name="Otsuki T."/>
            <person name="Sugiyama T."/>
            <person name="Irie R."/>
            <person name="Wakamatsu A."/>
            <person name="Hayashi K."/>
            <person name="Sato H."/>
            <person name="Nagai K."/>
            <person name="Kimura K."/>
            <person name="Makita H."/>
            <person name="Sekine M."/>
            <person name="Obayashi M."/>
            <person name="Nishi T."/>
            <person name="Shibahara T."/>
            <person name="Tanaka T."/>
            <person name="Ishii S."/>
            <person name="Yamamoto J."/>
            <person name="Saito K."/>
            <person name="Kawai Y."/>
            <person name="Isono Y."/>
            <person name="Nakamura Y."/>
            <person name="Nagahari K."/>
            <person name="Murakami K."/>
            <person name="Yasuda T."/>
            <person name="Iwayanagi T."/>
            <person name="Wagatsuma M."/>
            <person name="Shiratori A."/>
            <person name="Sudo H."/>
            <person name="Hosoiri T."/>
            <person name="Kaku Y."/>
            <person name="Kodaira H."/>
            <person name="Kondo H."/>
            <person name="Sugawara M."/>
            <person name="Takahashi M."/>
            <person name="Kanda K."/>
            <person name="Yokoi T."/>
            <person name="Furuya T."/>
            <person name="Kikkawa E."/>
            <person name="Omura Y."/>
            <person name="Abe K."/>
            <person name="Kamihara K."/>
            <person name="Katsuta N."/>
            <person name="Sato K."/>
            <person name="Tanikawa M."/>
            <person name="Yamazaki M."/>
            <person name="Ninomiya K."/>
            <person name="Ishibashi T."/>
            <person name="Yamashita H."/>
            <person name="Murakawa K."/>
            <person name="Fujimori K."/>
            <person name="Tanai H."/>
            <person name="Kimata M."/>
            <person name="Watanabe M."/>
            <person name="Hiraoka S."/>
            <person name="Chiba Y."/>
            <person name="Ishida S."/>
            <person name="Ono Y."/>
            <person name="Takiguchi S."/>
            <person name="Watanabe S."/>
            <person name="Yosida M."/>
            <person name="Hotuta T."/>
            <person name="Kusano J."/>
            <person name="Kanehori K."/>
            <person name="Takahashi-Fujii A."/>
            <person name="Hara H."/>
            <person name="Tanase T.-O."/>
            <person name="Nomura Y."/>
            <person name="Togiya S."/>
            <person name="Komai F."/>
            <person name="Hara R."/>
            <person name="Takeuchi K."/>
            <person name="Arita M."/>
            <person name="Imose N."/>
            <person name="Musashino K."/>
            <person name="Yuuki H."/>
            <person name="Oshima A."/>
            <person name="Sasaki N."/>
            <person name="Aotsuka S."/>
            <person name="Yoshikawa Y."/>
            <person name="Matsunawa H."/>
            <person name="Ichihara T."/>
            <person name="Shiohata N."/>
            <person name="Sano S."/>
            <person name="Moriya S."/>
            <person name="Momiyama H."/>
            <person name="Satoh N."/>
            <person name="Takami S."/>
            <person name="Terashima Y."/>
            <person name="Suzuki O."/>
            <person name="Nakagawa S."/>
            <person name="Senoh A."/>
            <person name="Mizoguchi H."/>
            <person name="Goto Y."/>
            <person name="Shimizu F."/>
            <person name="Wakebe H."/>
            <person name="Hishigaki H."/>
            <person name="Watanabe T."/>
            <person name="Sugiyama A."/>
            <person name="Takemoto M."/>
            <person name="Kawakami B."/>
            <person name="Yamazaki M."/>
            <person name="Watanabe K."/>
            <person name="Kumagai A."/>
            <person name="Itakura S."/>
            <person name="Fukuzumi Y."/>
            <person name="Fujimori Y."/>
            <person name="Komiyama M."/>
            <person name="Tashiro H."/>
            <person name="Tanigami A."/>
            <person name="Fujiwara T."/>
            <person name="Ono T."/>
            <person name="Yamada K."/>
            <person name="Fujii Y."/>
            <person name="Ozaki K."/>
            <person name="Hirao M."/>
            <person name="Ohmori Y."/>
            <person name="Kawabata A."/>
            <person name="Hikiji T."/>
            <person name="Kobatake N."/>
            <person name="Inagaki H."/>
            <person name="Ikema Y."/>
            <person name="Okamoto S."/>
            <person name="Okitani R."/>
            <person name="Kawakami T."/>
            <person name="Noguchi S."/>
            <person name="Itoh T."/>
            <person name="Shigeta K."/>
            <person name="Senba T."/>
            <person name="Matsumura K."/>
            <person name="Nakajima Y."/>
            <person name="Mizuno T."/>
            <person name="Morinaga M."/>
            <person name="Sasaki M."/>
            <person name="Togashi T."/>
            <person name="Oyama M."/>
            <person name="Hata H."/>
            <person name="Watanabe M."/>
            <person name="Komatsu T."/>
            <person name="Mizushima-Sugano J."/>
            <person name="Satoh T."/>
            <person name="Shirai Y."/>
            <person name="Takahashi Y."/>
            <person name="Nakagawa K."/>
            <person name="Okumura K."/>
            <person name="Nagase T."/>
            <person name="Nomura N."/>
            <person name="Kikuchi H."/>
            <person name="Masuho Y."/>
            <person name="Yamashita R."/>
            <person name="Nakai K."/>
            <person name="Yada T."/>
            <person name="Nakamura Y."/>
            <person name="Ohara O."/>
            <person name="Isogai T."/>
            <person name="Sugano S."/>
        </authorList>
    </citation>
    <scope>NUCLEOTIDE SEQUENCE [LARGE SCALE MRNA] (ISOFORMS 1 AND 2)</scope>
    <source>
        <tissue>Trachea</tissue>
    </source>
</reference>
<reference key="2">
    <citation type="journal article" date="2005" name="Nature">
        <title>Generation and annotation of the DNA sequences of human chromosomes 2 and 4.</title>
        <authorList>
            <person name="Hillier L.W."/>
            <person name="Graves T.A."/>
            <person name="Fulton R.S."/>
            <person name="Fulton L.A."/>
            <person name="Pepin K.H."/>
            <person name="Minx P."/>
            <person name="Wagner-McPherson C."/>
            <person name="Layman D."/>
            <person name="Wylie K."/>
            <person name="Sekhon M."/>
            <person name="Becker M.C."/>
            <person name="Fewell G.A."/>
            <person name="Delehaunty K.D."/>
            <person name="Miner T.L."/>
            <person name="Nash W.E."/>
            <person name="Kremitzki C."/>
            <person name="Oddy L."/>
            <person name="Du H."/>
            <person name="Sun H."/>
            <person name="Bradshaw-Cordum H."/>
            <person name="Ali J."/>
            <person name="Carter J."/>
            <person name="Cordes M."/>
            <person name="Harris A."/>
            <person name="Isak A."/>
            <person name="van Brunt A."/>
            <person name="Nguyen C."/>
            <person name="Du F."/>
            <person name="Courtney L."/>
            <person name="Kalicki J."/>
            <person name="Ozersky P."/>
            <person name="Abbott S."/>
            <person name="Armstrong J."/>
            <person name="Belter E.A."/>
            <person name="Caruso L."/>
            <person name="Cedroni M."/>
            <person name="Cotton M."/>
            <person name="Davidson T."/>
            <person name="Desai A."/>
            <person name="Elliott G."/>
            <person name="Erb T."/>
            <person name="Fronick C."/>
            <person name="Gaige T."/>
            <person name="Haakenson W."/>
            <person name="Haglund K."/>
            <person name="Holmes A."/>
            <person name="Harkins R."/>
            <person name="Kim K."/>
            <person name="Kruchowski S.S."/>
            <person name="Strong C.M."/>
            <person name="Grewal N."/>
            <person name="Goyea E."/>
            <person name="Hou S."/>
            <person name="Levy A."/>
            <person name="Martinka S."/>
            <person name="Mead K."/>
            <person name="McLellan M.D."/>
            <person name="Meyer R."/>
            <person name="Randall-Maher J."/>
            <person name="Tomlinson C."/>
            <person name="Dauphin-Kohlberg S."/>
            <person name="Kozlowicz-Reilly A."/>
            <person name="Shah N."/>
            <person name="Swearengen-Shahid S."/>
            <person name="Snider J."/>
            <person name="Strong J.T."/>
            <person name="Thompson J."/>
            <person name="Yoakum M."/>
            <person name="Leonard S."/>
            <person name="Pearman C."/>
            <person name="Trani L."/>
            <person name="Radionenko M."/>
            <person name="Waligorski J.E."/>
            <person name="Wang C."/>
            <person name="Rock S.M."/>
            <person name="Tin-Wollam A.-M."/>
            <person name="Maupin R."/>
            <person name="Latreille P."/>
            <person name="Wendl M.C."/>
            <person name="Yang S.-P."/>
            <person name="Pohl C."/>
            <person name="Wallis J.W."/>
            <person name="Spieth J."/>
            <person name="Bieri T.A."/>
            <person name="Berkowicz N."/>
            <person name="Nelson J.O."/>
            <person name="Osborne J."/>
            <person name="Ding L."/>
            <person name="Meyer R."/>
            <person name="Sabo A."/>
            <person name="Shotland Y."/>
            <person name="Sinha P."/>
            <person name="Wohldmann P.E."/>
            <person name="Cook L.L."/>
            <person name="Hickenbotham M.T."/>
            <person name="Eldred J."/>
            <person name="Williams D."/>
            <person name="Jones T.A."/>
            <person name="She X."/>
            <person name="Ciccarelli F.D."/>
            <person name="Izaurralde E."/>
            <person name="Taylor J."/>
            <person name="Schmutz J."/>
            <person name="Myers R.M."/>
            <person name="Cox D.R."/>
            <person name="Huang X."/>
            <person name="McPherson J.D."/>
            <person name="Mardis E.R."/>
            <person name="Clifton S.W."/>
            <person name="Warren W.C."/>
            <person name="Chinwalla A.T."/>
            <person name="Eddy S.R."/>
            <person name="Marra M.A."/>
            <person name="Ovcharenko I."/>
            <person name="Furey T.S."/>
            <person name="Miller W."/>
            <person name="Eichler E.E."/>
            <person name="Bork P."/>
            <person name="Suyama M."/>
            <person name="Torrents D."/>
            <person name="Waterston R.H."/>
            <person name="Wilson R.K."/>
        </authorList>
    </citation>
    <scope>NUCLEOTIDE SEQUENCE [LARGE SCALE GENOMIC DNA]</scope>
</reference>
<reference key="3">
    <citation type="submission" date="2005-09" db="EMBL/GenBank/DDBJ databases">
        <authorList>
            <person name="Mural R.J."/>
            <person name="Istrail S."/>
            <person name="Sutton G.G."/>
            <person name="Florea L."/>
            <person name="Halpern A.L."/>
            <person name="Mobarry C.M."/>
            <person name="Lippert R."/>
            <person name="Walenz B."/>
            <person name="Shatkay H."/>
            <person name="Dew I."/>
            <person name="Miller J.R."/>
            <person name="Flanigan M.J."/>
            <person name="Edwards N.J."/>
            <person name="Bolanos R."/>
            <person name="Fasulo D."/>
            <person name="Halldorsson B.V."/>
            <person name="Hannenhalli S."/>
            <person name="Turner R."/>
            <person name="Yooseph S."/>
            <person name="Lu F."/>
            <person name="Nusskern D.R."/>
            <person name="Shue B.C."/>
            <person name="Zheng X.H."/>
            <person name="Zhong F."/>
            <person name="Delcher A.L."/>
            <person name="Huson D.H."/>
            <person name="Kravitz S.A."/>
            <person name="Mouchard L."/>
            <person name="Reinert K."/>
            <person name="Remington K.A."/>
            <person name="Clark A.G."/>
            <person name="Waterman M.S."/>
            <person name="Eichler E.E."/>
            <person name="Adams M.D."/>
            <person name="Hunkapiller M.W."/>
            <person name="Myers E.W."/>
            <person name="Venter J.C."/>
        </authorList>
    </citation>
    <scope>NUCLEOTIDE SEQUENCE [LARGE SCALE GENOMIC DNA]</scope>
</reference>
<reference key="4">
    <citation type="journal article" date="2004" name="Genome Res.">
        <title>The status, quality, and expansion of the NIH full-length cDNA project: the Mammalian Gene Collection (MGC).</title>
        <authorList>
            <consortium name="The MGC Project Team"/>
        </authorList>
    </citation>
    <scope>NUCLEOTIDE SEQUENCE [LARGE SCALE MRNA] (ISOFORM 1)</scope>
    <source>
        <tissue>Kidney</tissue>
        <tissue>Skin</tissue>
        <tissue>Uterus</tissue>
    </source>
</reference>
<reference key="5">
    <citation type="journal article" date="2007" name="BMC Genomics">
        <title>The full-ORF clone resource of the German cDNA consortium.</title>
        <authorList>
            <person name="Bechtel S."/>
            <person name="Rosenfelder H."/>
            <person name="Duda A."/>
            <person name="Schmidt C.P."/>
            <person name="Ernst U."/>
            <person name="Wellenreuther R."/>
            <person name="Mehrle A."/>
            <person name="Schuster C."/>
            <person name="Bahr A."/>
            <person name="Bloecker H."/>
            <person name="Heubner D."/>
            <person name="Hoerlein A."/>
            <person name="Michel G."/>
            <person name="Wedler H."/>
            <person name="Koehrer K."/>
            <person name="Ottenwaelder B."/>
            <person name="Poustka A."/>
            <person name="Wiemann S."/>
            <person name="Schupp I."/>
        </authorList>
    </citation>
    <scope>NUCLEOTIDE SEQUENCE [LARGE SCALE MRNA] OF 678-845 (ISOFORM 1)</scope>
    <source>
        <tissue>Amygdala</tissue>
    </source>
</reference>
<reference key="6">
    <citation type="journal article" date="2007" name="Pharmacol. Ther.">
        <title>Protein arginine methyltransferases: evolution and assessment of their pharmacological and therapeutic potential.</title>
        <authorList>
            <person name="Krause C.D."/>
            <person name="Yang Z.-H."/>
            <person name="Kim Y.-S."/>
            <person name="Lee J.-H."/>
            <person name="Cook J.R."/>
            <person name="Pestka S."/>
        </authorList>
    </citation>
    <scope>IDENTIFICATION</scope>
</reference>
<reference key="7">
    <citation type="journal article" date="2009" name="Cell. Mol. Life Sci.">
        <title>The protein arginine methyltransferase family: an update about function, new perspectives and the physiological role in humans.</title>
        <authorList>
            <person name="Wolf S.S."/>
        </authorList>
    </citation>
    <scope>IDENTIFICATION</scope>
</reference>
<reference key="8">
    <citation type="journal article" date="2015" name="Nat. Commun.">
        <title>PRMT9 is a type II methyltransferase that methylates the splicing factor SAP145.</title>
        <authorList>
            <person name="Yang Y."/>
            <person name="Hadjikyriacou A."/>
            <person name="Xia Z."/>
            <person name="Gayatri S."/>
            <person name="Kim D."/>
            <person name="Zurita-Lopez C."/>
            <person name="Kelly R."/>
            <person name="Guo A."/>
            <person name="Li W."/>
            <person name="Clarke S.G."/>
            <person name="Bedford M.T."/>
        </authorList>
    </citation>
    <scope>SUBCELLULAR LOCATION</scope>
    <scope>FUNCTION</scope>
    <scope>INTERACTION WITH SF3B2</scope>
    <scope>CATALYTIC ACTIVITY</scope>
    <scope>MUTAGENESIS OF 182-LEU--GLY-185</scope>
</reference>
<reference key="9">
    <citation type="journal article" date="2015" name="J. Biol. Chem.">
        <title>Unique features of human protein arginine methyltransferase 9 (PRMT9) and its substrate RNA splicing factor SF3B2.</title>
        <authorList>
            <person name="Hadjikyriacou A."/>
            <person name="Yang Y."/>
            <person name="Espejo A."/>
            <person name="Bedford M.T."/>
            <person name="Clarke S.G."/>
        </authorList>
    </citation>
    <scope>SUBCELLULAR LOCATION</scope>
    <scope>CATALYTIC ACTIVITY</scope>
    <scope>FUNCTION</scope>
    <scope>BIOPHYSICOCHEMICAL PROPERTIES</scope>
    <scope>MUTAGENESIS OF ASP-258 AND GLY-260</scope>
    <scope>IDENTIFICATION IN A COMPLEX WITH PRMT9; SF3B2 AND SF3B4</scope>
</reference>
<reference key="10">
    <citation type="journal article" date="2016" name="J. Biol. Chem.">
        <title>Protein arginine methyltransferase product specificity is mediated by distinct active-site architectures.</title>
        <authorList>
            <person name="Jain K."/>
            <person name="Warmack R.A."/>
            <person name="Debler E.W."/>
            <person name="Hadjikyriacou A."/>
            <person name="Stavropoulos P."/>
            <person name="Clarke S.G."/>
        </authorList>
    </citation>
    <scope>MUTAGENESIS OF CYS-431</scope>
    <scope>CATALYTIC ACTIVITY</scope>
</reference>
<proteinExistence type="evidence at protein level"/>
<feature type="chain" id="PRO_0000325929" description="Protein arginine N-methyltransferase 9">
    <location>
        <begin position="1"/>
        <end position="845"/>
    </location>
</feature>
<feature type="repeat" description="TPR 1">
    <location>
        <begin position="25"/>
        <end position="58"/>
    </location>
</feature>
<feature type="repeat" description="TPR 2">
    <location>
        <begin position="67"/>
        <end position="100"/>
    </location>
</feature>
<feature type="repeat" description="TPR 3">
    <location>
        <begin position="101"/>
        <end position="134"/>
    </location>
</feature>
<feature type="domain" description="SAM-dependent MTase PRMT-type 1" evidence="1">
    <location>
        <begin position="137"/>
        <end position="466"/>
    </location>
</feature>
<feature type="domain" description="SAM-dependent MTase PRMT-type 2" evidence="1">
    <location>
        <begin position="530"/>
        <end position="845"/>
    </location>
</feature>
<feature type="splice variant" id="VSP_053972" description="In isoform 2." evidence="5">
    <location>
        <begin position="1"/>
        <end position="113"/>
    </location>
</feature>
<feature type="sequence variant" id="VAR_039954" description="In dbSNP:rs17023638.">
    <original>S</original>
    <variation>G</variation>
    <location>
        <position position="483"/>
    </location>
</feature>
<feature type="sequence variant" id="VAR_039955" description="In dbSNP:rs11557361.">
    <original>C</original>
    <variation>Y</variation>
    <location>
        <position position="747"/>
    </location>
</feature>
<feature type="mutagenesis site" description="Loss of interaction with SF3B2; Abolishes enzymatic activity." evidence="2">
    <original>LDIG</original>
    <variation>AAAA</variation>
    <location>
        <begin position="182"/>
        <end position="185"/>
    </location>
</feature>
<feature type="mutagenesis site" description="Abolishes enzymatic activity." evidence="3">
    <original>D</original>
    <variation>G</variation>
    <location>
        <position position="258"/>
    </location>
</feature>
<feature type="mutagenesis site" description="Abolishes enzymatic activity." evidence="3">
    <original>G</original>
    <variation>E</variation>
    <location>
        <position position="260"/>
    </location>
</feature>
<feature type="mutagenesis site" description="8-fold increase in MMA production and almost complete elimination of sDMA production." evidence="4">
    <original>C</original>
    <variation>H</variation>
    <location>
        <position position="431"/>
    </location>
</feature>
<feature type="sequence conflict" description="In Ref. 4; AAH21250." evidence="6" ref="4">
    <original>A</original>
    <variation>P</variation>
    <location>
        <position position="504"/>
    </location>
</feature>
<feature type="sequence conflict" description="In Ref. 1; BAF85593." evidence="6" ref="1">
    <original>E</original>
    <variation>G</variation>
    <location>
        <position position="805"/>
    </location>
</feature>
<feature type="helix" evidence="9">
    <location>
        <begin position="151"/>
        <end position="158"/>
    </location>
</feature>
<feature type="helix" evidence="9">
    <location>
        <begin position="160"/>
        <end position="175"/>
    </location>
</feature>
<feature type="strand" evidence="9">
    <location>
        <begin position="180"/>
        <end position="185"/>
    </location>
</feature>
<feature type="helix" evidence="9">
    <location>
        <begin position="190"/>
        <end position="197"/>
    </location>
</feature>
<feature type="strand" evidence="9">
    <location>
        <begin position="201"/>
        <end position="208"/>
    </location>
</feature>
<feature type="helix" evidence="9">
    <location>
        <begin position="210"/>
        <end position="222"/>
    </location>
</feature>
<feature type="turn" evidence="9">
    <location>
        <begin position="226"/>
        <end position="228"/>
    </location>
</feature>
<feature type="strand" evidence="9">
    <location>
        <begin position="229"/>
        <end position="234"/>
    </location>
</feature>
<feature type="helix" evidence="9">
    <location>
        <begin position="236"/>
        <end position="238"/>
    </location>
</feature>
<feature type="turn" evidence="9">
    <location>
        <begin position="241"/>
        <end position="244"/>
    </location>
</feature>
<feature type="strand" evidence="9">
    <location>
        <begin position="245"/>
        <end position="247"/>
    </location>
</feature>
<feature type="strand" evidence="9">
    <location>
        <begin position="249"/>
        <end position="254"/>
    </location>
</feature>
<feature type="helix" evidence="8">
    <location>
        <begin position="262"/>
        <end position="264"/>
    </location>
</feature>
<feature type="helix" evidence="9">
    <location>
        <begin position="266"/>
        <end position="276"/>
    </location>
</feature>
<feature type="helix" evidence="9">
    <location>
        <begin position="290"/>
        <end position="292"/>
    </location>
</feature>
<feature type="strand" evidence="9">
    <location>
        <begin position="295"/>
        <end position="298"/>
    </location>
</feature>
<feature type="strand" evidence="9">
    <location>
        <begin position="300"/>
        <end position="309"/>
    </location>
</feature>
<feature type="helix" evidence="9">
    <location>
        <begin position="311"/>
        <end position="314"/>
    </location>
</feature>
<feature type="turn" evidence="9">
    <location>
        <begin position="315"/>
        <end position="317"/>
    </location>
</feature>
<feature type="strand" evidence="9">
    <location>
        <begin position="322"/>
        <end position="324"/>
    </location>
</feature>
<feature type="strand" evidence="9">
    <location>
        <begin position="333"/>
        <end position="336"/>
    </location>
</feature>
<feature type="strand" evidence="9">
    <location>
        <begin position="353"/>
        <end position="355"/>
    </location>
</feature>
<feature type="helix" evidence="9">
    <location>
        <begin position="357"/>
        <end position="359"/>
    </location>
</feature>
<feature type="strand" evidence="9">
    <location>
        <begin position="365"/>
        <end position="368"/>
    </location>
</feature>
<feature type="strand" evidence="9">
    <location>
        <begin position="371"/>
        <end position="377"/>
    </location>
</feature>
<feature type="helix" evidence="9">
    <location>
        <begin position="381"/>
        <end position="386"/>
    </location>
</feature>
<feature type="helix" evidence="9">
    <location>
        <begin position="387"/>
        <end position="389"/>
    </location>
</feature>
<feature type="strand" evidence="9">
    <location>
        <begin position="393"/>
        <end position="399"/>
    </location>
</feature>
<feature type="strand" evidence="9">
    <location>
        <begin position="407"/>
        <end position="417"/>
    </location>
</feature>
<feature type="strand" evidence="9">
    <location>
        <begin position="420"/>
        <end position="423"/>
    </location>
</feature>
<feature type="strand" evidence="8">
    <location>
        <begin position="428"/>
        <end position="430"/>
    </location>
</feature>
<feature type="strand" evidence="9">
    <location>
        <begin position="434"/>
        <end position="438"/>
    </location>
</feature>
<feature type="strand" evidence="9">
    <location>
        <begin position="452"/>
        <end position="458"/>
    </location>
</feature>
<feature type="strand" evidence="9">
    <location>
        <begin position="460"/>
        <end position="463"/>
    </location>
</feature>
<feature type="strand" evidence="9">
    <location>
        <begin position="465"/>
        <end position="472"/>
    </location>
</feature>
<feature type="strand" evidence="9">
    <location>
        <begin position="516"/>
        <end position="519"/>
    </location>
</feature>
<feature type="helix" evidence="9">
    <location>
        <begin position="522"/>
        <end position="528"/>
    </location>
</feature>
<feature type="helix" evidence="9">
    <location>
        <begin position="531"/>
        <end position="546"/>
    </location>
</feature>
<feature type="helix" evidence="9">
    <location>
        <begin position="550"/>
        <end position="552"/>
    </location>
</feature>
<feature type="strand" evidence="9">
    <location>
        <begin position="582"/>
        <end position="587"/>
    </location>
</feature>
<feature type="helix" evidence="9">
    <location>
        <begin position="594"/>
        <end position="601"/>
    </location>
</feature>
<feature type="strand" evidence="9">
    <location>
        <begin position="602"/>
        <end position="608"/>
    </location>
</feature>
<feature type="helix" evidence="9">
    <location>
        <begin position="613"/>
        <end position="625"/>
    </location>
</feature>
<feature type="strand" evidence="9">
    <location>
        <begin position="632"/>
        <end position="636"/>
    </location>
</feature>
<feature type="strand" evidence="10">
    <location>
        <begin position="650"/>
        <end position="653"/>
    </location>
</feature>
<feature type="strand" evidence="9">
    <location>
        <begin position="656"/>
        <end position="661"/>
    </location>
</feature>
<feature type="strand" evidence="9">
    <location>
        <begin position="668"/>
        <end position="670"/>
    </location>
</feature>
<feature type="helix" evidence="9">
    <location>
        <begin position="674"/>
        <end position="683"/>
    </location>
</feature>
<feature type="strand" evidence="9">
    <location>
        <begin position="685"/>
        <end position="700"/>
    </location>
</feature>
<feature type="helix" evidence="9">
    <location>
        <begin position="706"/>
        <end position="710"/>
    </location>
</feature>
<feature type="helix" evidence="9">
    <location>
        <begin position="718"/>
        <end position="720"/>
    </location>
</feature>
<feature type="helix" evidence="9">
    <location>
        <begin position="726"/>
        <end position="729"/>
    </location>
</feature>
<feature type="helix" evidence="9">
    <location>
        <begin position="730"/>
        <end position="732"/>
    </location>
</feature>
<feature type="strand" evidence="9">
    <location>
        <begin position="735"/>
        <end position="740"/>
    </location>
</feature>
<feature type="helix" evidence="9">
    <location>
        <begin position="742"/>
        <end position="744"/>
    </location>
</feature>
<feature type="strand" evidence="9">
    <location>
        <begin position="748"/>
        <end position="751"/>
    </location>
</feature>
<feature type="strand" evidence="9">
    <location>
        <begin position="754"/>
        <end position="762"/>
    </location>
</feature>
<feature type="helix" evidence="9">
    <location>
        <begin position="764"/>
        <end position="766"/>
    </location>
</feature>
<feature type="strand" evidence="9">
    <location>
        <begin position="770"/>
        <end position="776"/>
    </location>
</feature>
<feature type="strand" evidence="9">
    <location>
        <begin position="781"/>
        <end position="797"/>
    </location>
</feature>
<feature type="strand" evidence="9">
    <location>
        <begin position="799"/>
        <end position="801"/>
    </location>
</feature>
<feature type="strand" evidence="9">
    <location>
        <begin position="811"/>
        <end position="822"/>
    </location>
</feature>
<feature type="strand" evidence="9">
    <location>
        <begin position="827"/>
        <end position="835"/>
    </location>
</feature>
<feature type="strand" evidence="9">
    <location>
        <begin position="838"/>
        <end position="843"/>
    </location>
</feature>